<organism>
    <name type="scientific">Corynebacterium jeikeium (strain K411)</name>
    <dbReference type="NCBI Taxonomy" id="306537"/>
    <lineage>
        <taxon>Bacteria</taxon>
        <taxon>Bacillati</taxon>
        <taxon>Actinomycetota</taxon>
        <taxon>Actinomycetes</taxon>
        <taxon>Mycobacteriales</taxon>
        <taxon>Corynebacteriaceae</taxon>
        <taxon>Corynebacterium</taxon>
    </lineage>
</organism>
<protein>
    <recommendedName>
        <fullName evidence="1">tRNA (guanine-N(1)-)-methyltransferase</fullName>
        <ecNumber evidence="1">2.1.1.228</ecNumber>
    </recommendedName>
    <alternativeName>
        <fullName evidence="1">M1G-methyltransferase</fullName>
    </alternativeName>
    <alternativeName>
        <fullName evidence="1">tRNA [GM37] methyltransferase</fullName>
    </alternativeName>
</protein>
<reference key="1">
    <citation type="journal article" date="2005" name="J. Bacteriol.">
        <title>Complete genome sequence and analysis of the multiresistant nosocomial pathogen Corynebacterium jeikeium K411, a lipid-requiring bacterium of the human skin flora.</title>
        <authorList>
            <person name="Tauch A."/>
            <person name="Kaiser O."/>
            <person name="Hain T."/>
            <person name="Goesmann A."/>
            <person name="Weisshaar B."/>
            <person name="Albersmeier A."/>
            <person name="Bekel T."/>
            <person name="Bischoff N."/>
            <person name="Brune I."/>
            <person name="Chakraborty T."/>
            <person name="Kalinowski J."/>
            <person name="Meyer F."/>
            <person name="Rupp O."/>
            <person name="Schneiker S."/>
            <person name="Viehoever P."/>
            <person name="Puehler A."/>
        </authorList>
    </citation>
    <scope>NUCLEOTIDE SEQUENCE [LARGE SCALE GENOMIC DNA]</scope>
    <source>
        <strain>K411</strain>
    </source>
</reference>
<evidence type="ECO:0000255" key="1">
    <source>
        <dbReference type="HAMAP-Rule" id="MF_00605"/>
    </source>
</evidence>
<evidence type="ECO:0000256" key="2">
    <source>
        <dbReference type="SAM" id="MobiDB-lite"/>
    </source>
</evidence>
<feature type="chain" id="PRO_0000060366" description="tRNA (guanine-N(1)-)-methyltransferase">
    <location>
        <begin position="1"/>
        <end position="282"/>
    </location>
</feature>
<feature type="region of interest" description="Disordered" evidence="2">
    <location>
        <begin position="77"/>
        <end position="114"/>
    </location>
</feature>
<feature type="binding site" evidence="1">
    <location>
        <position position="149"/>
    </location>
    <ligand>
        <name>S-adenosyl-L-methionine</name>
        <dbReference type="ChEBI" id="CHEBI:59789"/>
    </ligand>
</feature>
<feature type="binding site" evidence="1">
    <location>
        <begin position="173"/>
        <end position="178"/>
    </location>
    <ligand>
        <name>S-adenosyl-L-methionine</name>
        <dbReference type="ChEBI" id="CHEBI:59789"/>
    </ligand>
</feature>
<sequence>MRLDVVTIFPEYLEPLRHALLGKAIEQGILSVGVHNLRAWTNDVHQSVDSTPCGGGPGMVMKPEVWGPALDDVAAGTGPAATVSDLESSAEHKRNLRPATTNGDAEPLGEKAGGVTKPLLIVPTPAGKPFTQDMAERWSTEEHVVFACGRYEGIDQRVVEDAHNRYRVEEVSIGDYVLIGGEVAVLVMAEAMVRLIPGVLGNQASHQEDSFQDGLLEGPSYTRPRQWRGLDVPDVLFSGNHAKIAQWRREQSLARTKKIRPDLLDSVELSKADRAYLDGLEL</sequence>
<gene>
    <name evidence="1" type="primary">trmD</name>
    <name type="ordered locus">jk1190</name>
</gene>
<dbReference type="EC" id="2.1.1.228" evidence="1"/>
<dbReference type="EMBL" id="CR931997">
    <property type="protein sequence ID" value="CAI37354.1"/>
    <property type="molecule type" value="Genomic_DNA"/>
</dbReference>
<dbReference type="RefSeq" id="WP_011273708.1">
    <property type="nucleotide sequence ID" value="NC_007164.1"/>
</dbReference>
<dbReference type="SMR" id="Q4JV03"/>
<dbReference type="STRING" id="306537.jk1190"/>
<dbReference type="KEGG" id="cjk:jk1190"/>
<dbReference type="PATRIC" id="fig|306537.10.peg.1204"/>
<dbReference type="eggNOG" id="COG0336">
    <property type="taxonomic scope" value="Bacteria"/>
</dbReference>
<dbReference type="HOGENOM" id="CLU_047363_0_0_11"/>
<dbReference type="OrthoDB" id="9807416at2"/>
<dbReference type="Proteomes" id="UP000000545">
    <property type="component" value="Chromosome"/>
</dbReference>
<dbReference type="GO" id="GO:0005829">
    <property type="term" value="C:cytosol"/>
    <property type="evidence" value="ECO:0007669"/>
    <property type="project" value="TreeGrafter"/>
</dbReference>
<dbReference type="GO" id="GO:0052906">
    <property type="term" value="F:tRNA (guanine(37)-N1)-methyltransferase activity"/>
    <property type="evidence" value="ECO:0007669"/>
    <property type="project" value="UniProtKB-UniRule"/>
</dbReference>
<dbReference type="GO" id="GO:0002939">
    <property type="term" value="P:tRNA N1-guanine methylation"/>
    <property type="evidence" value="ECO:0007669"/>
    <property type="project" value="TreeGrafter"/>
</dbReference>
<dbReference type="CDD" id="cd18080">
    <property type="entry name" value="TrmD-like"/>
    <property type="match status" value="1"/>
</dbReference>
<dbReference type="FunFam" id="1.10.1270.20:FF:000004">
    <property type="entry name" value="tRNA (guanine-N(1)-)-methyltransferase"/>
    <property type="match status" value="1"/>
</dbReference>
<dbReference type="Gene3D" id="3.40.1280.10">
    <property type="match status" value="1"/>
</dbReference>
<dbReference type="Gene3D" id="1.10.1270.20">
    <property type="entry name" value="tRNA(m1g37)methyltransferase, domain 2"/>
    <property type="match status" value="1"/>
</dbReference>
<dbReference type="HAMAP" id="MF_00605">
    <property type="entry name" value="TrmD"/>
    <property type="match status" value="1"/>
</dbReference>
<dbReference type="InterPro" id="IPR029028">
    <property type="entry name" value="Alpha/beta_knot_MTases"/>
</dbReference>
<dbReference type="InterPro" id="IPR023148">
    <property type="entry name" value="tRNA_m1G_MeTrfase_C_sf"/>
</dbReference>
<dbReference type="InterPro" id="IPR002649">
    <property type="entry name" value="tRNA_m1G_MeTrfase_TrmD"/>
</dbReference>
<dbReference type="InterPro" id="IPR029026">
    <property type="entry name" value="tRNA_m1G_MTases_N"/>
</dbReference>
<dbReference type="InterPro" id="IPR016009">
    <property type="entry name" value="tRNA_MeTrfase_TRMD/TRM10"/>
</dbReference>
<dbReference type="NCBIfam" id="NF000648">
    <property type="entry name" value="PRK00026.1"/>
    <property type="match status" value="1"/>
</dbReference>
<dbReference type="PANTHER" id="PTHR46417">
    <property type="entry name" value="TRNA (GUANINE-N(1)-)-METHYLTRANSFERASE"/>
    <property type="match status" value="1"/>
</dbReference>
<dbReference type="PANTHER" id="PTHR46417:SF1">
    <property type="entry name" value="TRNA (GUANINE-N(1)-)-METHYLTRANSFERASE"/>
    <property type="match status" value="1"/>
</dbReference>
<dbReference type="Pfam" id="PF01746">
    <property type="entry name" value="tRNA_m1G_MT"/>
    <property type="match status" value="2"/>
</dbReference>
<dbReference type="PIRSF" id="PIRSF000386">
    <property type="entry name" value="tRNA_mtase"/>
    <property type="match status" value="1"/>
</dbReference>
<dbReference type="SUPFAM" id="SSF75217">
    <property type="entry name" value="alpha/beta knot"/>
    <property type="match status" value="1"/>
</dbReference>
<keyword id="KW-0963">Cytoplasm</keyword>
<keyword id="KW-0489">Methyltransferase</keyword>
<keyword id="KW-1185">Reference proteome</keyword>
<keyword id="KW-0949">S-adenosyl-L-methionine</keyword>
<keyword id="KW-0808">Transferase</keyword>
<keyword id="KW-0819">tRNA processing</keyword>
<name>TRMD_CORJK</name>
<comment type="function">
    <text evidence="1">Specifically methylates guanosine-37 in various tRNAs.</text>
</comment>
<comment type="catalytic activity">
    <reaction evidence="1">
        <text>guanosine(37) in tRNA + S-adenosyl-L-methionine = N(1)-methylguanosine(37) in tRNA + S-adenosyl-L-homocysteine + H(+)</text>
        <dbReference type="Rhea" id="RHEA:36899"/>
        <dbReference type="Rhea" id="RHEA-COMP:10145"/>
        <dbReference type="Rhea" id="RHEA-COMP:10147"/>
        <dbReference type="ChEBI" id="CHEBI:15378"/>
        <dbReference type="ChEBI" id="CHEBI:57856"/>
        <dbReference type="ChEBI" id="CHEBI:59789"/>
        <dbReference type="ChEBI" id="CHEBI:73542"/>
        <dbReference type="ChEBI" id="CHEBI:74269"/>
        <dbReference type="EC" id="2.1.1.228"/>
    </reaction>
</comment>
<comment type="subunit">
    <text evidence="1">Homodimer.</text>
</comment>
<comment type="subcellular location">
    <subcellularLocation>
        <location evidence="1">Cytoplasm</location>
    </subcellularLocation>
</comment>
<comment type="similarity">
    <text evidence="1">Belongs to the RNA methyltransferase TrmD family.</text>
</comment>
<accession>Q4JV03</accession>
<proteinExistence type="inferred from homology"/>